<keyword id="KW-0687">Ribonucleoprotein</keyword>
<keyword id="KW-0689">Ribosomal protein</keyword>
<keyword id="KW-0694">RNA-binding</keyword>
<keyword id="KW-0699">rRNA-binding</keyword>
<reference key="1">
    <citation type="journal article" date="2009" name="J. Bacteriol.">
        <title>Complete genome sequence of the extremophilic Bacillus cereus strain Q1 with industrial applications.</title>
        <authorList>
            <person name="Xiong Z."/>
            <person name="Jiang Y."/>
            <person name="Qi D."/>
            <person name="Lu H."/>
            <person name="Yang F."/>
            <person name="Yang J."/>
            <person name="Chen L."/>
            <person name="Sun L."/>
            <person name="Xu X."/>
            <person name="Xue Y."/>
            <person name="Zhu Y."/>
            <person name="Jin Q."/>
        </authorList>
    </citation>
    <scope>NUCLEOTIDE SEQUENCE [LARGE SCALE GENOMIC DNA]</scope>
    <source>
        <strain>Q1</strain>
    </source>
</reference>
<accession>B9IT30</accession>
<gene>
    <name evidence="1" type="primary">rpsR</name>
    <name type="ordered locus">BCQ_5322</name>
</gene>
<feature type="chain" id="PRO_1000125783" description="Small ribosomal subunit protein bS18">
    <location>
        <begin position="1"/>
        <end position="77"/>
    </location>
</feature>
<protein>
    <recommendedName>
        <fullName evidence="1">Small ribosomal subunit protein bS18</fullName>
    </recommendedName>
    <alternativeName>
        <fullName evidence="2">30S ribosomal protein S18</fullName>
    </alternativeName>
</protein>
<proteinExistence type="inferred from homology"/>
<comment type="function">
    <text evidence="1">Binds as a heterodimer with protein bS6 to the central domain of the 16S rRNA, where it helps stabilize the platform of the 30S subunit.</text>
</comment>
<comment type="subunit">
    <text evidence="1">Part of the 30S ribosomal subunit. Forms a tight heterodimer with protein bS6.</text>
</comment>
<comment type="similarity">
    <text evidence="1">Belongs to the bacterial ribosomal protein bS18 family.</text>
</comment>
<dbReference type="EMBL" id="CP000227">
    <property type="protein sequence ID" value="ACM15718.1"/>
    <property type="molecule type" value="Genomic_DNA"/>
</dbReference>
<dbReference type="SMR" id="B9IT30"/>
<dbReference type="KEGG" id="bcq:BCQ_5322"/>
<dbReference type="HOGENOM" id="CLU_148710_2_2_9"/>
<dbReference type="Proteomes" id="UP000000441">
    <property type="component" value="Chromosome"/>
</dbReference>
<dbReference type="GO" id="GO:0022627">
    <property type="term" value="C:cytosolic small ribosomal subunit"/>
    <property type="evidence" value="ECO:0007669"/>
    <property type="project" value="TreeGrafter"/>
</dbReference>
<dbReference type="GO" id="GO:0070181">
    <property type="term" value="F:small ribosomal subunit rRNA binding"/>
    <property type="evidence" value="ECO:0007669"/>
    <property type="project" value="TreeGrafter"/>
</dbReference>
<dbReference type="GO" id="GO:0003735">
    <property type="term" value="F:structural constituent of ribosome"/>
    <property type="evidence" value="ECO:0007669"/>
    <property type="project" value="InterPro"/>
</dbReference>
<dbReference type="GO" id="GO:0006412">
    <property type="term" value="P:translation"/>
    <property type="evidence" value="ECO:0007669"/>
    <property type="project" value="UniProtKB-UniRule"/>
</dbReference>
<dbReference type="FunFam" id="4.10.640.10:FF:000003">
    <property type="entry name" value="30S ribosomal protein S18"/>
    <property type="match status" value="1"/>
</dbReference>
<dbReference type="Gene3D" id="4.10.640.10">
    <property type="entry name" value="Ribosomal protein S18"/>
    <property type="match status" value="1"/>
</dbReference>
<dbReference type="HAMAP" id="MF_00270">
    <property type="entry name" value="Ribosomal_bS18"/>
    <property type="match status" value="1"/>
</dbReference>
<dbReference type="InterPro" id="IPR001648">
    <property type="entry name" value="Ribosomal_bS18"/>
</dbReference>
<dbReference type="InterPro" id="IPR018275">
    <property type="entry name" value="Ribosomal_bS18_CS"/>
</dbReference>
<dbReference type="InterPro" id="IPR036870">
    <property type="entry name" value="Ribosomal_bS18_sf"/>
</dbReference>
<dbReference type="NCBIfam" id="TIGR00165">
    <property type="entry name" value="S18"/>
    <property type="match status" value="1"/>
</dbReference>
<dbReference type="PANTHER" id="PTHR13479">
    <property type="entry name" value="30S RIBOSOMAL PROTEIN S18"/>
    <property type="match status" value="1"/>
</dbReference>
<dbReference type="PANTHER" id="PTHR13479:SF40">
    <property type="entry name" value="SMALL RIBOSOMAL SUBUNIT PROTEIN BS18M"/>
    <property type="match status" value="1"/>
</dbReference>
<dbReference type="Pfam" id="PF01084">
    <property type="entry name" value="Ribosomal_S18"/>
    <property type="match status" value="1"/>
</dbReference>
<dbReference type="PRINTS" id="PR00974">
    <property type="entry name" value="RIBOSOMALS18"/>
</dbReference>
<dbReference type="SUPFAM" id="SSF46911">
    <property type="entry name" value="Ribosomal protein S18"/>
    <property type="match status" value="1"/>
</dbReference>
<dbReference type="PROSITE" id="PS00057">
    <property type="entry name" value="RIBOSOMAL_S18"/>
    <property type="match status" value="1"/>
</dbReference>
<name>RS18_BACCQ</name>
<organism>
    <name type="scientific">Bacillus cereus (strain Q1)</name>
    <dbReference type="NCBI Taxonomy" id="361100"/>
    <lineage>
        <taxon>Bacteria</taxon>
        <taxon>Bacillati</taxon>
        <taxon>Bacillota</taxon>
        <taxon>Bacilli</taxon>
        <taxon>Bacillales</taxon>
        <taxon>Bacillaceae</taxon>
        <taxon>Bacillus</taxon>
        <taxon>Bacillus cereus group</taxon>
    </lineage>
</organism>
<evidence type="ECO:0000255" key="1">
    <source>
        <dbReference type="HAMAP-Rule" id="MF_00270"/>
    </source>
</evidence>
<evidence type="ECO:0000305" key="2"/>
<sequence>MAGRKGGRAKRRKVCFFTANGITRIDYKDVDLLKRFVSERGKILPRRVTGTSAKYQRKLTVAIKRARQMALLPYVGE</sequence>